<evidence type="ECO:0000255" key="1">
    <source>
        <dbReference type="HAMAP-Rule" id="MF_00505"/>
    </source>
</evidence>
<accession>A1W3A1</accession>
<organism>
    <name type="scientific">Acidovorax sp. (strain JS42)</name>
    <dbReference type="NCBI Taxonomy" id="232721"/>
    <lineage>
        <taxon>Bacteria</taxon>
        <taxon>Pseudomonadati</taxon>
        <taxon>Pseudomonadota</taxon>
        <taxon>Betaproteobacteria</taxon>
        <taxon>Burkholderiales</taxon>
        <taxon>Comamonadaceae</taxon>
        <taxon>Acidovorax</taxon>
    </lineage>
</organism>
<comment type="function">
    <text evidence="1">Molecular chaperone. Has ATPase activity.</text>
</comment>
<comment type="subunit">
    <text evidence="1">Homodimer.</text>
</comment>
<comment type="subcellular location">
    <subcellularLocation>
        <location evidence="1">Cytoplasm</location>
    </subcellularLocation>
</comment>
<comment type="similarity">
    <text evidence="1">Belongs to the heat shock protein 90 family.</text>
</comment>
<sequence>MSKHTHSFQAEVAQLLHLVTHSLYSNKEIFLRELVSNASDACDKLRFEALNNAALYEDAPNLEVRVSFDKEARTLTITDNGIGMSEQEAIDHLGTIAKSGTRDFMNRLSGDQKADAQLIGQFGVGFYSGFIVADRITVESRRAGLPASEGVRWASGGAGDFEVEAIERAARGTSVILHLREDAEEFLNAWKIKQVIGKYSDHISLPILMEKEEWKESEKEGEPGQMVKTGEWETVNKASALWTRPKKDITDEQYQDFYKSISHDFENPLTWSHNRVEGNTEYTQLLYIPAKAPFDLWNRDKKAGVKLYVKRVFIMDDAESLMPSYLRFVKGVIDSADLPLNVSRELLQESRDVRLIRDGSVKRVLSMLEDLAKHDKHEAAAEGADGVQDVVSAEDKAKEGKYTQFYAEFGAVLKEGLGEDFANRERLAKLLRFASTTSDTPSVSFADYKARMKEGQEAIYYITADTLAAAKNSPQLEVFKKKGIEVLLMTDRVDEWALNYLQDFDGTPLQSVAKGAVDLGKLQDEAEKKAAEEAAEAFKPMLAKLKEALKDKAEDVRVTTRLVDSPACLVVQDGGMSTQLARLLKQAGQSAPDAKPVLEVNPEHALVKKLDGSVHFHDLAHILFDQALLAEGGLPEDPAAYVKRVNALLA</sequence>
<reference key="1">
    <citation type="submission" date="2006-12" db="EMBL/GenBank/DDBJ databases">
        <title>Complete sequence of chromosome 1 of Acidovorax sp. JS42.</title>
        <authorList>
            <person name="Copeland A."/>
            <person name="Lucas S."/>
            <person name="Lapidus A."/>
            <person name="Barry K."/>
            <person name="Detter J.C."/>
            <person name="Glavina del Rio T."/>
            <person name="Dalin E."/>
            <person name="Tice H."/>
            <person name="Pitluck S."/>
            <person name="Chertkov O."/>
            <person name="Brettin T."/>
            <person name="Bruce D."/>
            <person name="Han C."/>
            <person name="Tapia R."/>
            <person name="Gilna P."/>
            <person name="Schmutz J."/>
            <person name="Larimer F."/>
            <person name="Land M."/>
            <person name="Hauser L."/>
            <person name="Kyrpides N."/>
            <person name="Kim E."/>
            <person name="Stahl D."/>
            <person name="Richardson P."/>
        </authorList>
    </citation>
    <scope>NUCLEOTIDE SEQUENCE [LARGE SCALE GENOMIC DNA]</scope>
    <source>
        <strain>JS42</strain>
    </source>
</reference>
<feature type="chain" id="PRO_1000014894" description="Chaperone protein HtpG">
    <location>
        <begin position="1"/>
        <end position="650"/>
    </location>
</feature>
<feature type="region of interest" description="A; substrate-binding" evidence="1">
    <location>
        <begin position="1"/>
        <end position="344"/>
    </location>
</feature>
<feature type="region of interest" description="B" evidence="1">
    <location>
        <begin position="345"/>
        <end position="582"/>
    </location>
</feature>
<feature type="region of interest" description="C" evidence="1">
    <location>
        <begin position="583"/>
        <end position="650"/>
    </location>
</feature>
<dbReference type="EMBL" id="CP000539">
    <property type="protein sequence ID" value="ABM40726.1"/>
    <property type="molecule type" value="Genomic_DNA"/>
</dbReference>
<dbReference type="SMR" id="A1W3A1"/>
<dbReference type="STRING" id="232721.Ajs_0475"/>
<dbReference type="KEGG" id="ajs:Ajs_0475"/>
<dbReference type="eggNOG" id="COG0326">
    <property type="taxonomic scope" value="Bacteria"/>
</dbReference>
<dbReference type="HOGENOM" id="CLU_006684_3_0_4"/>
<dbReference type="Proteomes" id="UP000000645">
    <property type="component" value="Chromosome"/>
</dbReference>
<dbReference type="GO" id="GO:0005737">
    <property type="term" value="C:cytoplasm"/>
    <property type="evidence" value="ECO:0007669"/>
    <property type="project" value="UniProtKB-SubCell"/>
</dbReference>
<dbReference type="GO" id="GO:0005524">
    <property type="term" value="F:ATP binding"/>
    <property type="evidence" value="ECO:0007669"/>
    <property type="project" value="UniProtKB-UniRule"/>
</dbReference>
<dbReference type="GO" id="GO:0016887">
    <property type="term" value="F:ATP hydrolysis activity"/>
    <property type="evidence" value="ECO:0007669"/>
    <property type="project" value="InterPro"/>
</dbReference>
<dbReference type="GO" id="GO:0140662">
    <property type="term" value="F:ATP-dependent protein folding chaperone"/>
    <property type="evidence" value="ECO:0007669"/>
    <property type="project" value="InterPro"/>
</dbReference>
<dbReference type="GO" id="GO:0051082">
    <property type="term" value="F:unfolded protein binding"/>
    <property type="evidence" value="ECO:0007669"/>
    <property type="project" value="UniProtKB-UniRule"/>
</dbReference>
<dbReference type="CDD" id="cd16927">
    <property type="entry name" value="HATPase_Hsp90-like"/>
    <property type="match status" value="1"/>
</dbReference>
<dbReference type="FunFam" id="3.30.565.10:FF:000009">
    <property type="entry name" value="Molecular chaperone HtpG"/>
    <property type="match status" value="1"/>
</dbReference>
<dbReference type="Gene3D" id="3.30.230.80">
    <property type="match status" value="1"/>
</dbReference>
<dbReference type="Gene3D" id="3.40.50.11260">
    <property type="match status" value="1"/>
</dbReference>
<dbReference type="Gene3D" id="1.20.120.790">
    <property type="entry name" value="Heat shock protein 90, C-terminal domain"/>
    <property type="match status" value="1"/>
</dbReference>
<dbReference type="Gene3D" id="3.30.565.10">
    <property type="entry name" value="Histidine kinase-like ATPase, C-terminal domain"/>
    <property type="match status" value="1"/>
</dbReference>
<dbReference type="HAMAP" id="MF_00505">
    <property type="entry name" value="HSP90"/>
    <property type="match status" value="1"/>
</dbReference>
<dbReference type="InterPro" id="IPR036890">
    <property type="entry name" value="HATPase_C_sf"/>
</dbReference>
<dbReference type="InterPro" id="IPR019805">
    <property type="entry name" value="Heat_shock_protein_90_CS"/>
</dbReference>
<dbReference type="InterPro" id="IPR037196">
    <property type="entry name" value="HSP90_C"/>
</dbReference>
<dbReference type="InterPro" id="IPR001404">
    <property type="entry name" value="Hsp90_fam"/>
</dbReference>
<dbReference type="InterPro" id="IPR020575">
    <property type="entry name" value="Hsp90_N"/>
</dbReference>
<dbReference type="InterPro" id="IPR020568">
    <property type="entry name" value="Ribosomal_Su5_D2-typ_SF"/>
</dbReference>
<dbReference type="NCBIfam" id="NF003555">
    <property type="entry name" value="PRK05218.1"/>
    <property type="match status" value="1"/>
</dbReference>
<dbReference type="PANTHER" id="PTHR11528">
    <property type="entry name" value="HEAT SHOCK PROTEIN 90 FAMILY MEMBER"/>
    <property type="match status" value="1"/>
</dbReference>
<dbReference type="Pfam" id="PF13589">
    <property type="entry name" value="HATPase_c_3"/>
    <property type="match status" value="1"/>
</dbReference>
<dbReference type="Pfam" id="PF00183">
    <property type="entry name" value="HSP90"/>
    <property type="match status" value="1"/>
</dbReference>
<dbReference type="PIRSF" id="PIRSF002583">
    <property type="entry name" value="Hsp90"/>
    <property type="match status" value="1"/>
</dbReference>
<dbReference type="PRINTS" id="PR00775">
    <property type="entry name" value="HEATSHOCK90"/>
</dbReference>
<dbReference type="SMART" id="SM00387">
    <property type="entry name" value="HATPase_c"/>
    <property type="match status" value="1"/>
</dbReference>
<dbReference type="SUPFAM" id="SSF55874">
    <property type="entry name" value="ATPase domain of HSP90 chaperone/DNA topoisomerase II/histidine kinase"/>
    <property type="match status" value="1"/>
</dbReference>
<dbReference type="SUPFAM" id="SSF110942">
    <property type="entry name" value="HSP90 C-terminal domain"/>
    <property type="match status" value="1"/>
</dbReference>
<dbReference type="SUPFAM" id="SSF54211">
    <property type="entry name" value="Ribosomal protein S5 domain 2-like"/>
    <property type="match status" value="1"/>
</dbReference>
<dbReference type="PROSITE" id="PS00298">
    <property type="entry name" value="HSP90"/>
    <property type="match status" value="1"/>
</dbReference>
<keyword id="KW-0067">ATP-binding</keyword>
<keyword id="KW-0143">Chaperone</keyword>
<keyword id="KW-0963">Cytoplasm</keyword>
<keyword id="KW-0547">Nucleotide-binding</keyword>
<keyword id="KW-0346">Stress response</keyword>
<proteinExistence type="inferred from homology"/>
<protein>
    <recommendedName>
        <fullName evidence="1">Chaperone protein HtpG</fullName>
    </recommendedName>
    <alternativeName>
        <fullName evidence="1">Heat shock protein HtpG</fullName>
    </alternativeName>
    <alternativeName>
        <fullName evidence="1">High temperature protein G</fullName>
    </alternativeName>
</protein>
<name>HTPG_ACISJ</name>
<gene>
    <name evidence="1" type="primary">htpG</name>
    <name type="ordered locus">Ajs_0475</name>
</gene>